<evidence type="ECO:0000255" key="1">
    <source>
        <dbReference type="HAMAP-Rule" id="MF_01456"/>
    </source>
</evidence>
<feature type="chain" id="PRO_0000287845" description="NADH-quinone oxidoreductase subunit K">
    <location>
        <begin position="1"/>
        <end position="102"/>
    </location>
</feature>
<feature type="transmembrane region" description="Helical" evidence="1">
    <location>
        <begin position="6"/>
        <end position="26"/>
    </location>
</feature>
<feature type="transmembrane region" description="Helical" evidence="1">
    <location>
        <begin position="30"/>
        <end position="50"/>
    </location>
</feature>
<feature type="transmembrane region" description="Helical" evidence="1">
    <location>
        <begin position="62"/>
        <end position="82"/>
    </location>
</feature>
<dbReference type="EC" id="7.1.1.-" evidence="1"/>
<dbReference type="EMBL" id="AE004091">
    <property type="protein sequence ID" value="AAG06034.1"/>
    <property type="molecule type" value="Genomic_DNA"/>
</dbReference>
<dbReference type="PIR" id="C83315">
    <property type="entry name" value="C83315"/>
</dbReference>
<dbReference type="RefSeq" id="NP_251336.1">
    <property type="nucleotide sequence ID" value="NC_002516.2"/>
</dbReference>
<dbReference type="RefSeq" id="WP_003090475.1">
    <property type="nucleotide sequence ID" value="NZ_QZGE01000008.1"/>
</dbReference>
<dbReference type="SMR" id="Q9I0J2"/>
<dbReference type="FunCoup" id="Q9I0J2">
    <property type="interactions" value="300"/>
</dbReference>
<dbReference type="STRING" id="208964.PA2646"/>
<dbReference type="PaxDb" id="208964-PA2646"/>
<dbReference type="DNASU" id="882355"/>
<dbReference type="GeneID" id="77220817"/>
<dbReference type="GeneID" id="882355"/>
<dbReference type="KEGG" id="pae:PA2646"/>
<dbReference type="PATRIC" id="fig|208964.12.peg.2769"/>
<dbReference type="PseudoCAP" id="PA2646"/>
<dbReference type="HOGENOM" id="CLU_144724_0_1_6"/>
<dbReference type="InParanoid" id="Q9I0J2"/>
<dbReference type="OrthoDB" id="9801357at2"/>
<dbReference type="PhylomeDB" id="Q9I0J2"/>
<dbReference type="BioCyc" id="PAER208964:G1FZ6-2686-MONOMER"/>
<dbReference type="Proteomes" id="UP000002438">
    <property type="component" value="Chromosome"/>
</dbReference>
<dbReference type="GO" id="GO:0030964">
    <property type="term" value="C:NADH dehydrogenase complex"/>
    <property type="evidence" value="ECO:0000318"/>
    <property type="project" value="GO_Central"/>
</dbReference>
<dbReference type="GO" id="GO:0005886">
    <property type="term" value="C:plasma membrane"/>
    <property type="evidence" value="ECO:0007669"/>
    <property type="project" value="UniProtKB-SubCell"/>
</dbReference>
<dbReference type="GO" id="GO:0050136">
    <property type="term" value="F:NADH:ubiquinone reductase (non-electrogenic) activity"/>
    <property type="evidence" value="ECO:0007669"/>
    <property type="project" value="UniProtKB-UniRule"/>
</dbReference>
<dbReference type="GO" id="GO:0048038">
    <property type="term" value="F:quinone binding"/>
    <property type="evidence" value="ECO:0007669"/>
    <property type="project" value="UniProtKB-KW"/>
</dbReference>
<dbReference type="GO" id="GO:0042773">
    <property type="term" value="P:ATP synthesis coupled electron transport"/>
    <property type="evidence" value="ECO:0007669"/>
    <property type="project" value="InterPro"/>
</dbReference>
<dbReference type="FunFam" id="1.10.287.3510:FF:000001">
    <property type="entry name" value="NADH-quinone oxidoreductase subunit K"/>
    <property type="match status" value="1"/>
</dbReference>
<dbReference type="Gene3D" id="1.10.287.3510">
    <property type="match status" value="1"/>
</dbReference>
<dbReference type="HAMAP" id="MF_01456">
    <property type="entry name" value="NDH1_NuoK"/>
    <property type="match status" value="1"/>
</dbReference>
<dbReference type="InterPro" id="IPR001133">
    <property type="entry name" value="NADH_UbQ_OxRdtase_chain4L/K"/>
</dbReference>
<dbReference type="InterPro" id="IPR039428">
    <property type="entry name" value="NUOK/Mnh_C1-like"/>
</dbReference>
<dbReference type="NCBIfam" id="NF004319">
    <property type="entry name" value="PRK05715.1-1"/>
    <property type="match status" value="1"/>
</dbReference>
<dbReference type="NCBIfam" id="NF004320">
    <property type="entry name" value="PRK05715.1-2"/>
    <property type="match status" value="1"/>
</dbReference>
<dbReference type="PANTHER" id="PTHR11434:SF16">
    <property type="entry name" value="NADH-UBIQUINONE OXIDOREDUCTASE CHAIN 4L"/>
    <property type="match status" value="1"/>
</dbReference>
<dbReference type="PANTHER" id="PTHR11434">
    <property type="entry name" value="NADH-UBIQUINONE OXIDOREDUCTASE SUBUNIT ND4L"/>
    <property type="match status" value="1"/>
</dbReference>
<dbReference type="Pfam" id="PF00420">
    <property type="entry name" value="Oxidored_q2"/>
    <property type="match status" value="1"/>
</dbReference>
<proteinExistence type="inferred from homology"/>
<keyword id="KW-0997">Cell inner membrane</keyword>
<keyword id="KW-1003">Cell membrane</keyword>
<keyword id="KW-0472">Membrane</keyword>
<keyword id="KW-0520">NAD</keyword>
<keyword id="KW-0874">Quinone</keyword>
<keyword id="KW-1185">Reference proteome</keyword>
<keyword id="KW-1278">Translocase</keyword>
<keyword id="KW-0812">Transmembrane</keyword>
<keyword id="KW-1133">Transmembrane helix</keyword>
<keyword id="KW-0813">Transport</keyword>
<keyword id="KW-0830">Ubiquinone</keyword>
<protein>
    <recommendedName>
        <fullName evidence="1">NADH-quinone oxidoreductase subunit K</fullName>
        <ecNumber evidence="1">7.1.1.-</ecNumber>
    </recommendedName>
    <alternativeName>
        <fullName evidence="1">NADH dehydrogenase I subunit K</fullName>
    </alternativeName>
    <alternativeName>
        <fullName evidence="1">NDH-1 subunit K</fullName>
    </alternativeName>
</protein>
<accession>Q9I0J2</accession>
<reference key="1">
    <citation type="journal article" date="2000" name="Nature">
        <title>Complete genome sequence of Pseudomonas aeruginosa PAO1, an opportunistic pathogen.</title>
        <authorList>
            <person name="Stover C.K."/>
            <person name="Pham X.-Q.T."/>
            <person name="Erwin A.L."/>
            <person name="Mizoguchi S.D."/>
            <person name="Warrener P."/>
            <person name="Hickey M.J."/>
            <person name="Brinkman F.S.L."/>
            <person name="Hufnagle W.O."/>
            <person name="Kowalik D.J."/>
            <person name="Lagrou M."/>
            <person name="Garber R.L."/>
            <person name="Goltry L."/>
            <person name="Tolentino E."/>
            <person name="Westbrock-Wadman S."/>
            <person name="Yuan Y."/>
            <person name="Brody L.L."/>
            <person name="Coulter S.N."/>
            <person name="Folger K.R."/>
            <person name="Kas A."/>
            <person name="Larbig K."/>
            <person name="Lim R.M."/>
            <person name="Smith K.A."/>
            <person name="Spencer D.H."/>
            <person name="Wong G.K.-S."/>
            <person name="Wu Z."/>
            <person name="Paulsen I.T."/>
            <person name="Reizer J."/>
            <person name="Saier M.H. Jr."/>
            <person name="Hancock R.E.W."/>
            <person name="Lory S."/>
            <person name="Olson M.V."/>
        </authorList>
    </citation>
    <scope>NUCLEOTIDE SEQUENCE [LARGE SCALE GENOMIC DNA]</scope>
    <source>
        <strain>ATCC 15692 / DSM 22644 / CIP 104116 / JCM 14847 / LMG 12228 / 1C / PRS 101 / PAO1</strain>
    </source>
</reference>
<organism>
    <name type="scientific">Pseudomonas aeruginosa (strain ATCC 15692 / DSM 22644 / CIP 104116 / JCM 14847 / LMG 12228 / 1C / PRS 101 / PAO1)</name>
    <dbReference type="NCBI Taxonomy" id="208964"/>
    <lineage>
        <taxon>Bacteria</taxon>
        <taxon>Pseudomonadati</taxon>
        <taxon>Pseudomonadota</taxon>
        <taxon>Gammaproteobacteria</taxon>
        <taxon>Pseudomonadales</taxon>
        <taxon>Pseudomonadaceae</taxon>
        <taxon>Pseudomonas</taxon>
    </lineage>
</organism>
<name>NUOK_PSEAE</name>
<comment type="function">
    <text evidence="1">NDH-1 shuttles electrons from NADH, via FMN and iron-sulfur (Fe-S) centers, to quinones in the respiratory chain. The immediate electron acceptor for the enzyme in this species is believed to be ubiquinone. Couples the redox reaction to proton translocation (for every two electrons transferred, four hydrogen ions are translocated across the cytoplasmic membrane), and thus conserves the redox energy in a proton gradient.</text>
</comment>
<comment type="catalytic activity">
    <reaction evidence="1">
        <text>a quinone + NADH + 5 H(+)(in) = a quinol + NAD(+) + 4 H(+)(out)</text>
        <dbReference type="Rhea" id="RHEA:57888"/>
        <dbReference type="ChEBI" id="CHEBI:15378"/>
        <dbReference type="ChEBI" id="CHEBI:24646"/>
        <dbReference type="ChEBI" id="CHEBI:57540"/>
        <dbReference type="ChEBI" id="CHEBI:57945"/>
        <dbReference type="ChEBI" id="CHEBI:132124"/>
    </reaction>
</comment>
<comment type="subunit">
    <text evidence="1">NDH-1 is composed of 13 different subunits. Subunits NuoA, H, J, K, L, M, N constitute the membrane sector of the complex.</text>
</comment>
<comment type="subcellular location">
    <subcellularLocation>
        <location evidence="1">Cell inner membrane</location>
        <topology evidence="1">Multi-pass membrane protein</topology>
    </subcellularLocation>
</comment>
<comment type="similarity">
    <text evidence="1">Belongs to the complex I subunit 4L family.</text>
</comment>
<gene>
    <name evidence="1" type="primary">nuoK</name>
    <name type="ordered locus">PA2646</name>
</gene>
<sequence>MNAIPLEHGLALASVLFALGLVGLMVRRNILFVLMSLEVMMNAAALAFVVAGSRWGQPDGQVMFILVLSLAAAEASIGLAILLQLYRRFHTLDIDAASEMRG</sequence>